<organism>
    <name type="scientific">Salmonella enteritidis PT4 (strain P125109)</name>
    <dbReference type="NCBI Taxonomy" id="550537"/>
    <lineage>
        <taxon>Bacteria</taxon>
        <taxon>Pseudomonadati</taxon>
        <taxon>Pseudomonadota</taxon>
        <taxon>Gammaproteobacteria</taxon>
        <taxon>Enterobacterales</taxon>
        <taxon>Enterobacteriaceae</taxon>
        <taxon>Salmonella</taxon>
    </lineage>
</organism>
<reference key="1">
    <citation type="journal article" date="2008" name="Genome Res.">
        <title>Comparative genome analysis of Salmonella enteritidis PT4 and Salmonella gallinarum 287/91 provides insights into evolutionary and host adaptation pathways.</title>
        <authorList>
            <person name="Thomson N.R."/>
            <person name="Clayton D.J."/>
            <person name="Windhorst D."/>
            <person name="Vernikos G."/>
            <person name="Davidson S."/>
            <person name="Churcher C."/>
            <person name="Quail M.A."/>
            <person name="Stevens M."/>
            <person name="Jones M.A."/>
            <person name="Watson M."/>
            <person name="Barron A."/>
            <person name="Layton A."/>
            <person name="Pickard D."/>
            <person name="Kingsley R.A."/>
            <person name="Bignell A."/>
            <person name="Clark L."/>
            <person name="Harris B."/>
            <person name="Ormond D."/>
            <person name="Abdellah Z."/>
            <person name="Brooks K."/>
            <person name="Cherevach I."/>
            <person name="Chillingworth T."/>
            <person name="Woodward J."/>
            <person name="Norberczak H."/>
            <person name="Lord A."/>
            <person name="Arrowsmith C."/>
            <person name="Jagels K."/>
            <person name="Moule S."/>
            <person name="Mungall K."/>
            <person name="Saunders M."/>
            <person name="Whitehead S."/>
            <person name="Chabalgoity J.A."/>
            <person name="Maskell D."/>
            <person name="Humphreys T."/>
            <person name="Roberts M."/>
            <person name="Barrow P.A."/>
            <person name="Dougan G."/>
            <person name="Parkhill J."/>
        </authorList>
    </citation>
    <scope>NUCLEOTIDE SEQUENCE [LARGE SCALE GENOMIC DNA]</scope>
    <source>
        <strain>P125109</strain>
    </source>
</reference>
<gene>
    <name evidence="1" type="primary">dnaJ</name>
    <name type="ordered locus">SEN0012</name>
</gene>
<proteinExistence type="inferred from homology"/>
<accession>B5R5I3</accession>
<protein>
    <recommendedName>
        <fullName evidence="1">Chaperone protein DnaJ</fullName>
    </recommendedName>
</protein>
<name>DNAJ_SALEP</name>
<feature type="chain" id="PRO_1000137721" description="Chaperone protein DnaJ">
    <location>
        <begin position="1"/>
        <end position="379"/>
    </location>
</feature>
<feature type="domain" description="J" evidence="1">
    <location>
        <begin position="5"/>
        <end position="70"/>
    </location>
</feature>
<feature type="repeat" description="CXXCXGXG motif">
    <location>
        <begin position="147"/>
        <end position="154"/>
    </location>
</feature>
<feature type="repeat" description="CXXCXGXG motif">
    <location>
        <begin position="164"/>
        <end position="171"/>
    </location>
</feature>
<feature type="repeat" description="CXXCXGXG motif">
    <location>
        <begin position="186"/>
        <end position="193"/>
    </location>
</feature>
<feature type="repeat" description="CXXCXGXG motif">
    <location>
        <begin position="200"/>
        <end position="207"/>
    </location>
</feature>
<feature type="zinc finger region" description="CR-type" evidence="1">
    <location>
        <begin position="134"/>
        <end position="212"/>
    </location>
</feature>
<feature type="binding site" evidence="1">
    <location>
        <position position="147"/>
    </location>
    <ligand>
        <name>Zn(2+)</name>
        <dbReference type="ChEBI" id="CHEBI:29105"/>
        <label>1</label>
    </ligand>
</feature>
<feature type="binding site" evidence="1">
    <location>
        <position position="150"/>
    </location>
    <ligand>
        <name>Zn(2+)</name>
        <dbReference type="ChEBI" id="CHEBI:29105"/>
        <label>1</label>
    </ligand>
</feature>
<feature type="binding site" evidence="1">
    <location>
        <position position="164"/>
    </location>
    <ligand>
        <name>Zn(2+)</name>
        <dbReference type="ChEBI" id="CHEBI:29105"/>
        <label>2</label>
    </ligand>
</feature>
<feature type="binding site" evidence="1">
    <location>
        <position position="167"/>
    </location>
    <ligand>
        <name>Zn(2+)</name>
        <dbReference type="ChEBI" id="CHEBI:29105"/>
        <label>2</label>
    </ligand>
</feature>
<feature type="binding site" evidence="1">
    <location>
        <position position="186"/>
    </location>
    <ligand>
        <name>Zn(2+)</name>
        <dbReference type="ChEBI" id="CHEBI:29105"/>
        <label>2</label>
    </ligand>
</feature>
<feature type="binding site" evidence="1">
    <location>
        <position position="189"/>
    </location>
    <ligand>
        <name>Zn(2+)</name>
        <dbReference type="ChEBI" id="CHEBI:29105"/>
        <label>2</label>
    </ligand>
</feature>
<feature type="binding site" evidence="1">
    <location>
        <position position="200"/>
    </location>
    <ligand>
        <name>Zn(2+)</name>
        <dbReference type="ChEBI" id="CHEBI:29105"/>
        <label>1</label>
    </ligand>
</feature>
<feature type="binding site" evidence="1">
    <location>
        <position position="203"/>
    </location>
    <ligand>
        <name>Zn(2+)</name>
        <dbReference type="ChEBI" id="CHEBI:29105"/>
        <label>1</label>
    </ligand>
</feature>
<sequence>MAKRDYYEILGVSKTAEEREIKKAYKRLAMKYHPDRNQGDKEAEAKFKEIKEAYEVLTDAQKRAAYDQYGHAAFEQGGMGGGFGGGFNGGADFSDIFGDVFGDIFGGGRGRQRAARGADLRYNMDLTLEEAVRGVTKEIRIPTLEECDVCHGSGAKAGTQPQTCPTCHGSGQVQMRQGFFAVQQTCPHCQGRGTLIKDPCHKCHGHGRVEKSKTLSVKIPAGVDTGDRIRLAGEGEAGEHGAPAGDLYVQVQVKQHPIFEREGNNLYCEVPINFAMAALGGEIEVPTLDGRVMLKVPSETQTGKLFRMRGKGVKSVRGGAQGDLLCRVVVETPVGLSEKQKQLLKDLQESFGGPTGEKNSPRSKSFFDGVKKFFDDLTR</sequence>
<comment type="function">
    <text evidence="1">Participates actively in the response to hyperosmotic and heat shock by preventing the aggregation of stress-denatured proteins and by disaggregating proteins, also in an autonomous, DnaK-independent fashion. Unfolded proteins bind initially to DnaJ; upon interaction with the DnaJ-bound protein, DnaK hydrolyzes its bound ATP, resulting in the formation of a stable complex. GrpE releases ADP from DnaK; ATP binding to DnaK triggers the release of the substrate protein, thus completing the reaction cycle. Several rounds of ATP-dependent interactions between DnaJ, DnaK and GrpE are required for fully efficient folding. Also involved, together with DnaK and GrpE, in the DNA replication of plasmids through activation of initiation proteins.</text>
</comment>
<comment type="cofactor">
    <cofactor evidence="1">
        <name>Zn(2+)</name>
        <dbReference type="ChEBI" id="CHEBI:29105"/>
    </cofactor>
    <text evidence="1">Binds 2 Zn(2+) ions per monomer.</text>
</comment>
<comment type="subunit">
    <text evidence="1">Homodimer.</text>
</comment>
<comment type="subcellular location">
    <subcellularLocation>
        <location evidence="1">Cytoplasm</location>
    </subcellularLocation>
</comment>
<comment type="domain">
    <text evidence="1">The J domain is necessary and sufficient to stimulate DnaK ATPase activity. Zinc center 1 plays an important role in the autonomous, DnaK-independent chaperone activity of DnaJ. Zinc center 2 is essential for interaction with DnaK and for DnaJ activity.</text>
</comment>
<comment type="similarity">
    <text evidence="1">Belongs to the DnaJ family.</text>
</comment>
<evidence type="ECO:0000255" key="1">
    <source>
        <dbReference type="HAMAP-Rule" id="MF_01152"/>
    </source>
</evidence>
<dbReference type="EMBL" id="AM933172">
    <property type="protein sequence ID" value="CAR31603.1"/>
    <property type="molecule type" value="Genomic_DNA"/>
</dbReference>
<dbReference type="RefSeq" id="WP_001119009.1">
    <property type="nucleotide sequence ID" value="NC_011294.1"/>
</dbReference>
<dbReference type="SMR" id="B5R5I3"/>
<dbReference type="KEGG" id="set:SEN0012"/>
<dbReference type="HOGENOM" id="CLU_017633_0_7_6"/>
<dbReference type="Proteomes" id="UP000000613">
    <property type="component" value="Chromosome"/>
</dbReference>
<dbReference type="GO" id="GO:0005737">
    <property type="term" value="C:cytoplasm"/>
    <property type="evidence" value="ECO:0007669"/>
    <property type="project" value="UniProtKB-SubCell"/>
</dbReference>
<dbReference type="GO" id="GO:0005524">
    <property type="term" value="F:ATP binding"/>
    <property type="evidence" value="ECO:0007669"/>
    <property type="project" value="InterPro"/>
</dbReference>
<dbReference type="GO" id="GO:0031072">
    <property type="term" value="F:heat shock protein binding"/>
    <property type="evidence" value="ECO:0007669"/>
    <property type="project" value="InterPro"/>
</dbReference>
<dbReference type="GO" id="GO:0051082">
    <property type="term" value="F:unfolded protein binding"/>
    <property type="evidence" value="ECO:0007669"/>
    <property type="project" value="UniProtKB-UniRule"/>
</dbReference>
<dbReference type="GO" id="GO:0008270">
    <property type="term" value="F:zinc ion binding"/>
    <property type="evidence" value="ECO:0007669"/>
    <property type="project" value="UniProtKB-UniRule"/>
</dbReference>
<dbReference type="GO" id="GO:0051085">
    <property type="term" value="P:chaperone cofactor-dependent protein refolding"/>
    <property type="evidence" value="ECO:0007669"/>
    <property type="project" value="TreeGrafter"/>
</dbReference>
<dbReference type="GO" id="GO:0006260">
    <property type="term" value="P:DNA replication"/>
    <property type="evidence" value="ECO:0007669"/>
    <property type="project" value="UniProtKB-KW"/>
</dbReference>
<dbReference type="GO" id="GO:0042026">
    <property type="term" value="P:protein refolding"/>
    <property type="evidence" value="ECO:0007669"/>
    <property type="project" value="TreeGrafter"/>
</dbReference>
<dbReference type="GO" id="GO:0009408">
    <property type="term" value="P:response to heat"/>
    <property type="evidence" value="ECO:0007669"/>
    <property type="project" value="InterPro"/>
</dbReference>
<dbReference type="CDD" id="cd06257">
    <property type="entry name" value="DnaJ"/>
    <property type="match status" value="1"/>
</dbReference>
<dbReference type="CDD" id="cd10747">
    <property type="entry name" value="DnaJ_C"/>
    <property type="match status" value="1"/>
</dbReference>
<dbReference type="CDD" id="cd10719">
    <property type="entry name" value="DnaJ_zf"/>
    <property type="match status" value="1"/>
</dbReference>
<dbReference type="FunFam" id="1.10.287.110:FF:000003">
    <property type="entry name" value="Molecular chaperone DnaJ"/>
    <property type="match status" value="1"/>
</dbReference>
<dbReference type="FunFam" id="2.10.230.10:FF:000002">
    <property type="entry name" value="Molecular chaperone DnaJ"/>
    <property type="match status" value="1"/>
</dbReference>
<dbReference type="FunFam" id="2.60.260.20:FF:000004">
    <property type="entry name" value="Molecular chaperone DnaJ"/>
    <property type="match status" value="1"/>
</dbReference>
<dbReference type="Gene3D" id="1.10.287.110">
    <property type="entry name" value="DnaJ domain"/>
    <property type="match status" value="1"/>
</dbReference>
<dbReference type="Gene3D" id="2.10.230.10">
    <property type="entry name" value="Heat shock protein DnaJ, cysteine-rich domain"/>
    <property type="match status" value="1"/>
</dbReference>
<dbReference type="Gene3D" id="2.60.260.20">
    <property type="entry name" value="Urease metallochaperone UreE, N-terminal domain"/>
    <property type="match status" value="2"/>
</dbReference>
<dbReference type="HAMAP" id="MF_01152">
    <property type="entry name" value="DnaJ"/>
    <property type="match status" value="1"/>
</dbReference>
<dbReference type="InterPro" id="IPR012724">
    <property type="entry name" value="DnaJ"/>
</dbReference>
<dbReference type="InterPro" id="IPR002939">
    <property type="entry name" value="DnaJ_C"/>
</dbReference>
<dbReference type="InterPro" id="IPR001623">
    <property type="entry name" value="DnaJ_domain"/>
</dbReference>
<dbReference type="InterPro" id="IPR018253">
    <property type="entry name" value="DnaJ_domain_CS"/>
</dbReference>
<dbReference type="InterPro" id="IPR008971">
    <property type="entry name" value="HSP40/DnaJ_pept-bd"/>
</dbReference>
<dbReference type="InterPro" id="IPR001305">
    <property type="entry name" value="HSP_DnaJ_Cys-rich_dom"/>
</dbReference>
<dbReference type="InterPro" id="IPR036410">
    <property type="entry name" value="HSP_DnaJ_Cys-rich_dom_sf"/>
</dbReference>
<dbReference type="InterPro" id="IPR036869">
    <property type="entry name" value="J_dom_sf"/>
</dbReference>
<dbReference type="NCBIfam" id="TIGR02349">
    <property type="entry name" value="DnaJ_bact"/>
    <property type="match status" value="1"/>
</dbReference>
<dbReference type="NCBIfam" id="NF008035">
    <property type="entry name" value="PRK10767.1"/>
    <property type="match status" value="1"/>
</dbReference>
<dbReference type="PANTHER" id="PTHR43096:SF48">
    <property type="entry name" value="CHAPERONE PROTEIN DNAJ"/>
    <property type="match status" value="1"/>
</dbReference>
<dbReference type="PANTHER" id="PTHR43096">
    <property type="entry name" value="DNAJ HOMOLOG 1, MITOCHONDRIAL-RELATED"/>
    <property type="match status" value="1"/>
</dbReference>
<dbReference type="Pfam" id="PF00226">
    <property type="entry name" value="DnaJ"/>
    <property type="match status" value="1"/>
</dbReference>
<dbReference type="Pfam" id="PF01556">
    <property type="entry name" value="DnaJ_C"/>
    <property type="match status" value="1"/>
</dbReference>
<dbReference type="Pfam" id="PF00684">
    <property type="entry name" value="DnaJ_CXXCXGXG"/>
    <property type="match status" value="1"/>
</dbReference>
<dbReference type="PRINTS" id="PR00625">
    <property type="entry name" value="JDOMAIN"/>
</dbReference>
<dbReference type="SMART" id="SM00271">
    <property type="entry name" value="DnaJ"/>
    <property type="match status" value="1"/>
</dbReference>
<dbReference type="SUPFAM" id="SSF46565">
    <property type="entry name" value="Chaperone J-domain"/>
    <property type="match status" value="1"/>
</dbReference>
<dbReference type="SUPFAM" id="SSF57938">
    <property type="entry name" value="DnaJ/Hsp40 cysteine-rich domain"/>
    <property type="match status" value="1"/>
</dbReference>
<dbReference type="SUPFAM" id="SSF49493">
    <property type="entry name" value="HSP40/DnaJ peptide-binding domain"/>
    <property type="match status" value="2"/>
</dbReference>
<dbReference type="PROSITE" id="PS00636">
    <property type="entry name" value="DNAJ_1"/>
    <property type="match status" value="1"/>
</dbReference>
<dbReference type="PROSITE" id="PS50076">
    <property type="entry name" value="DNAJ_2"/>
    <property type="match status" value="1"/>
</dbReference>
<dbReference type="PROSITE" id="PS51188">
    <property type="entry name" value="ZF_CR"/>
    <property type="match status" value="1"/>
</dbReference>
<keyword id="KW-0143">Chaperone</keyword>
<keyword id="KW-0963">Cytoplasm</keyword>
<keyword id="KW-0235">DNA replication</keyword>
<keyword id="KW-0479">Metal-binding</keyword>
<keyword id="KW-0677">Repeat</keyword>
<keyword id="KW-0346">Stress response</keyword>
<keyword id="KW-0862">Zinc</keyword>
<keyword id="KW-0863">Zinc-finger</keyword>